<reference key="1">
    <citation type="journal article" date="1993" name="J. Bacteriol.">
        <title>Cloning, sequencing, and expression of the DNA gyrase genes from Staphylococcus aureus.</title>
        <authorList>
            <person name="Brockbank S.M.V."/>
            <person name="Barth P.T."/>
        </authorList>
    </citation>
    <scope>NUCLEOTIDE SEQUENCE [GENOMIC DNA]</scope>
    <scope>PROTEIN SEQUENCE OF 2-27 AND 314-335</scope>
    <source>
        <strain>601055</strain>
    </source>
</reference>
<reference key="2">
    <citation type="journal article" date="1994" name="Antimicrob. Agents Chemother.">
        <title>Quinolone resistance mutations in the DNA gyrase gyrA and gyrB genes of Staphylococcus aureus.</title>
        <authorList>
            <person name="Ito H."/>
            <person name="Yoshida H."/>
            <person name="Bogaki-Shonai M."/>
            <person name="Niga T."/>
            <person name="Hattori H."/>
            <person name="Nakamura S."/>
        </authorList>
    </citation>
    <scope>NUCLEOTIDE SEQUENCE [GENOMIC DNA]</scope>
    <source>
        <strain>ATCC 12600 / DSM 20231 / IAM 12544 / NCDO 949 / NCTC 8532</strain>
    </source>
</reference>
<reference key="3">
    <citation type="journal article" date="1992" name="J. Bacteriol.">
        <title>Nucleotide sequence of the Staphylococcus aureus gyrB-gyrA locus encoding the DNA gyrase A and B proteins.</title>
        <authorList>
            <person name="Margerrison E.E.C."/>
            <person name="Hopewell R."/>
            <person name="Fisher L.M."/>
        </authorList>
    </citation>
    <scope>NUCLEOTIDE SEQUENCE [GENOMIC DNA]</scope>
</reference>
<reference key="4">
    <citation type="journal article" date="1995" name="Mol. Gen. Genet.">
        <title>Nucleotide sequence of the recF gene cluster from Staphylococcus aureus and complementation analysis in Bacillus subtilis recF mutants.</title>
        <authorList>
            <person name="Alonso J.C."/>
            <person name="Fisher L.M."/>
        </authorList>
    </citation>
    <scope>NUCLEOTIDE SEQUENCE [GENOMIC DNA] OF 1-30</scope>
    <source>
        <strain>YB886</strain>
    </source>
</reference>
<reference key="5">
    <citation type="journal article" date="1990" name="J. Bacteriol.">
        <title>DNA cloning and organization of the Staphylococcus aureus gyrA and gyrB genes: close homology among gyrase proteins and implications for 4-quinolone action and resistance.</title>
        <authorList>
            <person name="Hopewell R."/>
            <person name="Oram M."/>
            <person name="Briesewitz R."/>
            <person name="Fisher L.M."/>
        </authorList>
    </citation>
    <scope>NUCLEOTIDE SEQUENCE [GENOMIC DNA] OF 593-644</scope>
</reference>
<reference key="6">
    <citation type="journal article" date="2010" name="Bioorg. Med. Chem. Lett.">
        <title>Discovery of pyrazolthiazoles as novel and potent inhibitors of bacterial gyrase.</title>
        <authorList>
            <person name="Ronkin S.M."/>
            <person name="Badia M."/>
            <person name="Bellon S."/>
            <person name="Grillot A.L."/>
            <person name="Gross C.H."/>
            <person name="Grossman T.H."/>
            <person name="Mani N."/>
            <person name="Parsons J.D."/>
            <person name="Stamos D."/>
            <person name="Trudeau M."/>
            <person name="Wei Y."/>
            <person name="Charifson P.S."/>
        </authorList>
    </citation>
    <scope>X-RAY CRYSTALLOGRAPHY (2.3 ANGSTROMS) OF 24-230 IN COMPLEX WITH PYRAZOLTHIAZOLE INHIBITOR</scope>
    <scope>ACTIVITY REGULATION</scope>
</reference>
<keyword id="KW-0002">3D-structure</keyword>
<keyword id="KW-0046">Antibiotic resistance</keyword>
<keyword id="KW-0067">ATP-binding</keyword>
<keyword id="KW-0963">Cytoplasm</keyword>
<keyword id="KW-0903">Direct protein sequencing</keyword>
<keyword id="KW-0238">DNA-binding</keyword>
<keyword id="KW-0413">Isomerase</keyword>
<keyword id="KW-0460">Magnesium</keyword>
<keyword id="KW-0479">Metal-binding</keyword>
<keyword id="KW-0547">Nucleotide-binding</keyword>
<keyword id="KW-0799">Topoisomerase</keyword>
<accession>P0A0K8</accession>
<accession>P20832</accession>
<organism>
    <name type="scientific">Staphylococcus aureus</name>
    <dbReference type="NCBI Taxonomy" id="1280"/>
    <lineage>
        <taxon>Bacteria</taxon>
        <taxon>Bacillati</taxon>
        <taxon>Bacillota</taxon>
        <taxon>Bacilli</taxon>
        <taxon>Bacillales</taxon>
        <taxon>Staphylococcaceae</taxon>
        <taxon>Staphylococcus</taxon>
    </lineage>
</organism>
<proteinExistence type="evidence at protein level"/>
<comment type="function">
    <text evidence="1">A type II topoisomerase that negatively supercoils closed circular double-stranded (ds) DNA in an ATP-dependent manner to modulate DNA topology and maintain chromosomes in an underwound state. Negative supercoiling favors strand separation, and DNA replication, transcription, recombination and repair, all of which involve strand separation. Also able to catalyze the interconversion of other topological isomers of dsDNA rings, including catenanes and knotted rings. Type II topoisomerases break and join 2 DNA strands simultaneously in an ATP-dependent manner.</text>
</comment>
<comment type="catalytic activity">
    <reaction evidence="1">
        <text>ATP-dependent breakage, passage and rejoining of double-stranded DNA.</text>
        <dbReference type="EC" id="5.6.2.2"/>
    </reaction>
</comment>
<comment type="cofactor">
    <cofactor evidence="1">
        <name>Mg(2+)</name>
        <dbReference type="ChEBI" id="CHEBI:18420"/>
    </cofactor>
    <cofactor evidence="1">
        <name>Mn(2+)</name>
        <dbReference type="ChEBI" id="CHEBI:29035"/>
    </cofactor>
    <cofactor evidence="1">
        <name>Ca(2+)</name>
        <dbReference type="ChEBI" id="CHEBI:29108"/>
    </cofactor>
    <text evidence="1">Binds two Mg(2+) per subunit. The magnesium ions form salt bridges with both the protein and the DNA. Can also accept other divalent metal cations, such as Mn(2+) or Ca(2+).</text>
</comment>
<comment type="activity regulation">
    <text evidence="2">Pyrazolthiazoles inhibit the ATPase activity of GyrB (PubMed:20356737).</text>
</comment>
<comment type="subunit">
    <text evidence="1">Heterotetramer, composed of two GyrA and two GyrB chains. In the heterotetramer, GyrA contains the active site tyrosine that forms a transient covalent intermediate with DNA, while GyrB binds cofactors and catalyzes ATP hydrolysis.</text>
</comment>
<comment type="subcellular location">
    <subcellularLocation>
        <location evidence="1">Cytoplasm</location>
    </subcellularLocation>
</comment>
<comment type="miscellaneous">
    <text evidence="1">Few gyrases are as efficient as E.coli at forming negative supercoils. Not all organisms have 2 type II topoisomerases; in organisms with a single type II topoisomerase this enzyme also has to decatenate newly replicated chromosomes.</text>
</comment>
<comment type="similarity">
    <text evidence="1">Belongs to the type II topoisomerase GyrB family.</text>
</comment>
<name>GYRB_STAAU</name>
<feature type="initiator methionine" description="Removed" evidence="3">
    <location>
        <position position="1"/>
    </location>
</feature>
<feature type="chain" id="PRO_0000145342" description="DNA gyrase subunit B">
    <location>
        <begin position="2"/>
        <end position="644"/>
    </location>
</feature>
<feature type="domain" description="Toprim" evidence="1">
    <location>
        <begin position="429"/>
        <end position="543"/>
    </location>
</feature>
<feature type="binding site" evidence="1">
    <location>
        <position position="435"/>
    </location>
    <ligand>
        <name>Mg(2+)</name>
        <dbReference type="ChEBI" id="CHEBI:18420"/>
        <label>1</label>
        <note>catalytic</note>
    </ligand>
</feature>
<feature type="binding site" evidence="1">
    <location>
        <position position="508"/>
    </location>
    <ligand>
        <name>Mg(2+)</name>
        <dbReference type="ChEBI" id="CHEBI:18420"/>
        <label>1</label>
        <note>catalytic</note>
    </ligand>
</feature>
<feature type="binding site" evidence="1">
    <location>
        <position position="508"/>
    </location>
    <ligand>
        <name>Mg(2+)</name>
        <dbReference type="ChEBI" id="CHEBI:18420"/>
        <label>2</label>
    </ligand>
</feature>
<feature type="binding site" evidence="1">
    <location>
        <position position="510"/>
    </location>
    <ligand>
        <name>Mg(2+)</name>
        <dbReference type="ChEBI" id="CHEBI:18420"/>
        <label>2</label>
    </ligand>
</feature>
<feature type="site" description="Interaction with DNA" evidence="1">
    <location>
        <position position="460"/>
    </location>
</feature>
<feature type="site" description="Interaction with DNA" evidence="1">
    <location>
        <position position="463"/>
    </location>
</feature>
<feature type="sequence conflict" description="In Ref. 3; AAA73951." evidence="4" ref="3">
    <original>SERGLHHLVW</original>
    <variation>QRELHISV</variation>
    <location>
        <begin position="40"/>
        <end position="49"/>
    </location>
</feature>
<feature type="sequence conflict" description="In Ref. 3; AAA73951." evidence="4" ref="3">
    <original>Q</original>
    <variation>K</variation>
    <location>
        <position position="66"/>
    </location>
</feature>
<feature type="sequence conflict" description="In Ref. 3; AAA73951." evidence="4" ref="3">
    <original>KIMKEEKDRL</original>
    <variation>RYEEEKIA</variation>
    <location>
        <begin position="312"/>
        <end position="321"/>
    </location>
</feature>
<feature type="sequence conflict" description="In Ref. 3; AAA73951." evidence="4" ref="3">
    <original>K</original>
    <variation>Q</variation>
    <location>
        <position position="424"/>
    </location>
</feature>
<feature type="sequence conflict" description="In Ref. 3; AAA73951." evidence="4" ref="3">
    <original>T</original>
    <variation>I</variation>
    <location>
        <position position="522"/>
    </location>
</feature>
<feature type="sequence conflict" description="In Ref. 3; AAA73951." evidence="4" ref="3">
    <original>R</original>
    <variation>L</variation>
    <location>
        <position position="579"/>
    </location>
</feature>
<feature type="turn" evidence="7">
    <location>
        <begin position="2"/>
        <end position="4"/>
    </location>
</feature>
<feature type="helix" evidence="6">
    <location>
        <begin position="17"/>
        <end position="30"/>
    </location>
</feature>
<feature type="helix" evidence="6">
    <location>
        <begin position="32"/>
        <end position="36"/>
    </location>
</feature>
<feature type="helix" evidence="6">
    <location>
        <begin position="41"/>
        <end position="60"/>
    </location>
</feature>
<feature type="strand" evidence="6">
    <location>
        <begin position="66"/>
        <end position="72"/>
    </location>
</feature>
<feature type="helix" evidence="6">
    <location>
        <begin position="73"/>
        <end position="75"/>
    </location>
</feature>
<feature type="strand" evidence="6">
    <location>
        <begin position="76"/>
        <end position="81"/>
    </location>
</feature>
<feature type="strand" evidence="8">
    <location>
        <begin position="89"/>
        <end position="91"/>
    </location>
</feature>
<feature type="turn" evidence="6">
    <location>
        <begin position="92"/>
        <end position="94"/>
    </location>
</feature>
<feature type="strand" evidence="6">
    <location>
        <begin position="95"/>
        <end position="97"/>
    </location>
</feature>
<feature type="helix" evidence="6">
    <location>
        <begin position="98"/>
        <end position="104"/>
    </location>
</feature>
<feature type="helix" evidence="6">
    <location>
        <begin position="130"/>
        <end position="133"/>
    </location>
</feature>
<feature type="strand" evidence="6">
    <location>
        <begin position="135"/>
        <end position="144"/>
    </location>
</feature>
<feature type="strand" evidence="6">
    <location>
        <begin position="147"/>
        <end position="154"/>
    </location>
</feature>
<feature type="strand" evidence="6">
    <location>
        <begin position="157"/>
        <end position="160"/>
    </location>
</feature>
<feature type="strand" evidence="6">
    <location>
        <begin position="163"/>
        <end position="167"/>
    </location>
</feature>
<feature type="strand" evidence="6">
    <location>
        <begin position="172"/>
        <end position="179"/>
    </location>
</feature>
<feature type="turn" evidence="6">
    <location>
        <begin position="181"/>
        <end position="183"/>
    </location>
</feature>
<feature type="helix" evidence="6">
    <location>
        <begin position="192"/>
        <end position="205"/>
    </location>
</feature>
<feature type="turn" evidence="5">
    <location>
        <begin position="206"/>
        <end position="208"/>
    </location>
</feature>
<feature type="strand" evidence="6">
    <location>
        <begin position="210"/>
        <end position="215"/>
    </location>
</feature>
<feature type="strand" evidence="6">
    <location>
        <begin position="223"/>
        <end position="227"/>
    </location>
</feature>
<feature type="helix" evidence="9">
    <location>
        <begin position="426"/>
        <end position="428"/>
    </location>
</feature>
<feature type="strand" evidence="9">
    <location>
        <begin position="430"/>
        <end position="435"/>
    </location>
</feature>
<feature type="helix" evidence="9">
    <location>
        <begin position="437"/>
        <end position="446"/>
    </location>
</feature>
<feature type="turn" evidence="9">
    <location>
        <begin position="449"/>
        <end position="451"/>
    </location>
</feature>
<feature type="strand" evidence="9">
    <location>
        <begin position="452"/>
        <end position="457"/>
    </location>
</feature>
<feature type="turn" evidence="9">
    <location>
        <begin position="464"/>
        <end position="466"/>
    </location>
</feature>
<feature type="helix" evidence="9">
    <location>
        <begin position="469"/>
        <end position="473"/>
    </location>
</feature>
<feature type="helix" evidence="9">
    <location>
        <begin position="476"/>
        <end position="485"/>
    </location>
</feature>
<feature type="helix" evidence="9">
    <location>
        <begin position="490"/>
        <end position="492"/>
    </location>
</feature>
<feature type="helix" evidence="9">
    <location>
        <begin position="495"/>
        <end position="497"/>
    </location>
</feature>
<feature type="strand" evidence="9">
    <location>
        <begin position="501"/>
        <end position="506"/>
    </location>
</feature>
<feature type="helix" evidence="9">
    <location>
        <begin position="511"/>
        <end position="527"/>
    </location>
</feature>
<feature type="helix" evidence="9">
    <location>
        <begin position="529"/>
        <end position="533"/>
    </location>
</feature>
<feature type="strand" evidence="9">
    <location>
        <begin position="537"/>
        <end position="539"/>
    </location>
</feature>
<feature type="strand" evidence="9">
    <location>
        <begin position="578"/>
        <end position="582"/>
    </location>
</feature>
<feature type="helix" evidence="9">
    <location>
        <begin position="583"/>
        <end position="585"/>
    </location>
</feature>
<feature type="helix" evidence="9">
    <location>
        <begin position="588"/>
        <end position="595"/>
    </location>
</feature>
<feature type="turn" evidence="9">
    <location>
        <begin position="598"/>
        <end position="600"/>
    </location>
</feature>
<feature type="strand" evidence="9">
    <location>
        <begin position="604"/>
        <end position="607"/>
    </location>
</feature>
<feature type="helix" evidence="9">
    <location>
        <begin position="611"/>
        <end position="622"/>
    </location>
</feature>
<feature type="helix" evidence="9">
    <location>
        <begin position="626"/>
        <end position="636"/>
    </location>
</feature>
<protein>
    <recommendedName>
        <fullName evidence="1">DNA gyrase subunit B</fullName>
        <ecNumber evidence="1">5.6.2.2</ecNumber>
    </recommendedName>
</protein>
<gene>
    <name evidence="1" type="primary">gyrB</name>
</gene>
<sequence>MVTALSDVNNTDNYGAGQIQVLEGLEAVRKRPGMYIGSTSERGLHHLVWEIVDNSIDEALAGYANQIEVVIEKDNWIKVTDNGRGIPVDIQEKMGRPAVEVILTVLHAGGKFGGGGYKVSGGLHGVGSSVVNALSQDLEVYVHRNETIYHQAYKKGVPQFDLKEVGTTDKTGTVIRFKADGEIFTETTVYNYETLQQRIRELAFLNKGIQITLRDERDEENVREDSYHYEGGIKSYVELLNENKEPIHDEPIYIHQSKDDIEVEIAIQYNSGYATNLLTYANNIHTYEGGTHEDGFKRALTRVLNSYGLSSKIMKEEKDRLSGEDTREGMTAIISIKHGDPQFEGQTKTKLGNSEVRQVVDKLFSEHFERFLYENPQVARTVVEKGIMAARARVAAKKAREVTRRKSALDVASLPGKLADCSSKSPEECEIFLVEGDSAGGSTKSGRDSRTQAILPLRGKILNVEKARLDRILNNNEIRQMITAFGTGIGGDFDLAKARYHKIVIMTDADVDGAHIRTLLLTFFYRFMRPLIEAGYVYIAQPPLYKLTQGKQKYYVYNDRELDKLKSELNPTPKWSIARYKGLGEMNADQLWETTMNPEHRALLQVKLEDAIEADQTFEMLMGDVVENRRQFIEDNAVYANLDF</sequence>
<evidence type="ECO:0000255" key="1">
    <source>
        <dbReference type="HAMAP-Rule" id="MF_01898"/>
    </source>
</evidence>
<evidence type="ECO:0000269" key="2">
    <source>
    </source>
</evidence>
<evidence type="ECO:0000269" key="3">
    <source>
    </source>
</evidence>
<evidence type="ECO:0000305" key="4"/>
<evidence type="ECO:0007829" key="5">
    <source>
        <dbReference type="PDB" id="3G7B"/>
    </source>
</evidence>
<evidence type="ECO:0007829" key="6">
    <source>
        <dbReference type="PDB" id="5CPH"/>
    </source>
</evidence>
<evidence type="ECO:0007829" key="7">
    <source>
        <dbReference type="PDB" id="5CTU"/>
    </source>
</evidence>
<evidence type="ECO:0007829" key="8">
    <source>
        <dbReference type="PDB" id="5D7D"/>
    </source>
</evidence>
<evidence type="ECO:0007829" key="9">
    <source>
        <dbReference type="PDB" id="6Z1A"/>
    </source>
</evidence>
<dbReference type="EC" id="5.6.2.2" evidence="1"/>
<dbReference type="EMBL" id="X71437">
    <property type="protein sequence ID" value="CAA50570.1"/>
    <property type="molecule type" value="Genomic_DNA"/>
</dbReference>
<dbReference type="EMBL" id="D10489">
    <property type="protein sequence ID" value="BAA01369.1"/>
    <property type="molecule type" value="Genomic_DNA"/>
</dbReference>
<dbReference type="EMBL" id="M86227">
    <property type="protein sequence ID" value="AAA73951.1"/>
    <property type="molecule type" value="Genomic_DNA"/>
</dbReference>
<dbReference type="EMBL" id="M37915">
    <property type="protein sequence ID" value="AAA26635.1"/>
    <property type="molecule type" value="Genomic_DNA"/>
</dbReference>
<dbReference type="PIR" id="A40585">
    <property type="entry name" value="A40585"/>
</dbReference>
<dbReference type="RefSeq" id="WP_000255586.1">
    <property type="nucleotide sequence ID" value="NZ_WWFR01000002.1"/>
</dbReference>
<dbReference type="PDB" id="3G75">
    <property type="method" value="X-ray"/>
    <property type="resolution" value="2.30 A"/>
    <property type="chains" value="A/B=24-230"/>
</dbReference>
<dbReference type="PDB" id="3G7B">
    <property type="method" value="X-ray"/>
    <property type="resolution" value="2.30 A"/>
    <property type="chains" value="A/B=24-230"/>
</dbReference>
<dbReference type="PDB" id="3TTZ">
    <property type="method" value="X-ray"/>
    <property type="resolution" value="1.63 A"/>
    <property type="chains" value="A/B=14-233"/>
</dbReference>
<dbReference type="PDB" id="3U2D">
    <property type="method" value="X-ray"/>
    <property type="resolution" value="1.85 A"/>
    <property type="chains" value="A/B=14-233"/>
</dbReference>
<dbReference type="PDB" id="3U2K">
    <property type="method" value="X-ray"/>
    <property type="resolution" value="1.64 A"/>
    <property type="chains" value="A/B=14-233"/>
</dbReference>
<dbReference type="PDB" id="4PLB">
    <property type="method" value="X-ray"/>
    <property type="resolution" value="2.69 A"/>
    <property type="chains" value="B/D=410-543, B/D=580-644"/>
</dbReference>
<dbReference type="PDB" id="4URM">
    <property type="method" value="X-ray"/>
    <property type="resolution" value="2.94 A"/>
    <property type="chains" value="A/B/C/D=1-231"/>
</dbReference>
<dbReference type="PDB" id="4URO">
    <property type="method" value="X-ray"/>
    <property type="resolution" value="2.59 A"/>
    <property type="chains" value="A/B/C/D=1-231"/>
</dbReference>
<dbReference type="PDB" id="5BS3">
    <property type="method" value="X-ray"/>
    <property type="resolution" value="2.65 A"/>
    <property type="chains" value="B/D=410-543, B/D=580-644"/>
</dbReference>
<dbReference type="PDB" id="5CPH">
    <property type="method" value="X-ray"/>
    <property type="resolution" value="1.20 A"/>
    <property type="chains" value="A/B=2-234"/>
</dbReference>
<dbReference type="PDB" id="5CTU">
    <property type="method" value="X-ray"/>
    <property type="resolution" value="1.45 A"/>
    <property type="chains" value="A/B=2-234"/>
</dbReference>
<dbReference type="PDB" id="5CTW">
    <property type="method" value="X-ray"/>
    <property type="resolution" value="1.48 A"/>
    <property type="chains" value="A/B=2-234"/>
</dbReference>
<dbReference type="PDB" id="5CTX">
    <property type="method" value="X-ray"/>
    <property type="resolution" value="1.60 A"/>
    <property type="chains" value="A/B=2-234"/>
</dbReference>
<dbReference type="PDB" id="5CTY">
    <property type="method" value="X-ray"/>
    <property type="resolution" value="1.60 A"/>
    <property type="chains" value="A/B=2-234"/>
</dbReference>
<dbReference type="PDB" id="5D6P">
    <property type="method" value="X-ray"/>
    <property type="resolution" value="2.05 A"/>
    <property type="chains" value="A/B=2-234"/>
</dbReference>
<dbReference type="PDB" id="5D6Q">
    <property type="method" value="X-ray"/>
    <property type="resolution" value="1.50 A"/>
    <property type="chains" value="A/B=2-234"/>
</dbReference>
<dbReference type="PDB" id="5D7C">
    <property type="method" value="X-ray"/>
    <property type="resolution" value="1.55 A"/>
    <property type="chains" value="A/B=2-234"/>
</dbReference>
<dbReference type="PDB" id="5D7D">
    <property type="method" value="X-ray"/>
    <property type="resolution" value="1.60 A"/>
    <property type="chains" value="A/B=2-234"/>
</dbReference>
<dbReference type="PDB" id="5D7R">
    <property type="method" value="X-ray"/>
    <property type="resolution" value="1.55 A"/>
    <property type="chains" value="A/B=2-234"/>
</dbReference>
<dbReference type="PDB" id="5IWI">
    <property type="method" value="X-ray"/>
    <property type="resolution" value="1.98 A"/>
    <property type="chains" value="B/D=410-543, B/D=580-644"/>
</dbReference>
<dbReference type="PDB" id="5IWM">
    <property type="method" value="X-ray"/>
    <property type="resolution" value="2.50 A"/>
    <property type="chains" value="B/D=410-543, B/D=580-644"/>
</dbReference>
<dbReference type="PDB" id="5Z9P">
    <property type="method" value="X-ray"/>
    <property type="resolution" value="1.45 A"/>
    <property type="chains" value="A/B=14-233"/>
</dbReference>
<dbReference type="PDB" id="6QTK">
    <property type="method" value="X-ray"/>
    <property type="resolution" value="2.31 A"/>
    <property type="chains" value="B/D=409-644"/>
</dbReference>
<dbReference type="PDB" id="6QTP">
    <property type="method" value="X-ray"/>
    <property type="resolution" value="2.37 A"/>
    <property type="chains" value="B/D=409-543, B/D=580-644"/>
</dbReference>
<dbReference type="PDB" id="6QX1">
    <property type="method" value="X-ray"/>
    <property type="resolution" value="2.65 A"/>
    <property type="chains" value="B/D=409-543"/>
</dbReference>
<dbReference type="PDB" id="6QX2">
    <property type="method" value="X-ray"/>
    <property type="resolution" value="3.40 A"/>
    <property type="chains" value="B/S/b/s=416-638"/>
</dbReference>
<dbReference type="PDB" id="6TCK">
    <property type="method" value="X-ray"/>
    <property type="resolution" value="1.60 A"/>
    <property type="chains" value="A/B=2-234"/>
</dbReference>
<dbReference type="PDB" id="6TTG">
    <property type="method" value="X-ray"/>
    <property type="resolution" value="1.70 A"/>
    <property type="chains" value="A/B=2-234"/>
</dbReference>
<dbReference type="PDB" id="6Z1A">
    <property type="method" value="X-ray"/>
    <property type="resolution" value="2.30 A"/>
    <property type="chains" value="B/D=409-644"/>
</dbReference>
<dbReference type="PDB" id="7MVS">
    <property type="method" value="X-ray"/>
    <property type="resolution" value="2.60 A"/>
    <property type="chains" value="A/B=410-543, A/B=580-644"/>
</dbReference>
<dbReference type="PDBsum" id="3G75"/>
<dbReference type="PDBsum" id="3G7B"/>
<dbReference type="PDBsum" id="3TTZ"/>
<dbReference type="PDBsum" id="3U2D"/>
<dbReference type="PDBsum" id="3U2K"/>
<dbReference type="PDBsum" id="4PLB"/>
<dbReference type="PDBsum" id="4URM"/>
<dbReference type="PDBsum" id="4URO"/>
<dbReference type="PDBsum" id="5BS3"/>
<dbReference type="PDBsum" id="5CPH"/>
<dbReference type="PDBsum" id="5CTU"/>
<dbReference type="PDBsum" id="5CTW"/>
<dbReference type="PDBsum" id="5CTX"/>
<dbReference type="PDBsum" id="5CTY"/>
<dbReference type="PDBsum" id="5D6P"/>
<dbReference type="PDBsum" id="5D6Q"/>
<dbReference type="PDBsum" id="5D7C"/>
<dbReference type="PDBsum" id="5D7D"/>
<dbReference type="PDBsum" id="5D7R"/>
<dbReference type="PDBsum" id="5IWI"/>
<dbReference type="PDBsum" id="5IWM"/>
<dbReference type="PDBsum" id="5Z9P"/>
<dbReference type="PDBsum" id="6QTK"/>
<dbReference type="PDBsum" id="6QTP"/>
<dbReference type="PDBsum" id="6QX1"/>
<dbReference type="PDBsum" id="6QX2"/>
<dbReference type="PDBsum" id="6TCK"/>
<dbReference type="PDBsum" id="6TTG"/>
<dbReference type="PDBsum" id="6Z1A"/>
<dbReference type="PDBsum" id="7MVS"/>
<dbReference type="BMRB" id="P0A0K8"/>
<dbReference type="SMR" id="P0A0K8"/>
<dbReference type="BindingDB" id="P0A0K8"/>
<dbReference type="ChEMBL" id="CHEMBL1921666"/>
<dbReference type="DrugBank" id="DB06771">
    <property type="generic name" value="Besifloxacin"/>
</dbReference>
<dbReference type="DrugBank" id="DB00537">
    <property type="generic name" value="Ciprofloxacin"/>
</dbReference>
<dbReference type="DrugBank" id="DB14025">
    <property type="generic name" value="Clinafloxacin"/>
</dbReference>
<dbReference type="DrugBank" id="DB11393">
    <property type="generic name" value="Danofloxacin"/>
</dbReference>
<dbReference type="DrugBank" id="DB09047">
    <property type="generic name" value="Finafloxacin"/>
</dbReference>
<dbReference type="DrugBank" id="DB01044">
    <property type="generic name" value="Gatifloxacin"/>
</dbReference>
<dbReference type="DrugBank" id="DB01155">
    <property type="generic name" value="Gemifloxacin"/>
</dbReference>
<dbReference type="DrugBank" id="DB00365">
    <property type="generic name" value="Grepafloxacin"/>
</dbReference>
<dbReference type="DrugBank" id="DB01137">
    <property type="generic name" value="Levofloxacin"/>
</dbReference>
<dbReference type="DrugBank" id="DB00218">
    <property type="generic name" value="Moxifloxacin"/>
</dbReference>
<dbReference type="DrugBank" id="DB06600">
    <property type="generic name" value="Nemonoxacin"/>
</dbReference>
<dbReference type="DrugBank" id="DB01059">
    <property type="generic name" value="Norfloxacin"/>
</dbReference>
<dbReference type="DrugBank" id="DB01051">
    <property type="generic name" value="Novobiocin"/>
</dbReference>
<dbReference type="DrugBank" id="DB01165">
    <property type="generic name" value="Ofloxacin"/>
</dbReference>
<dbReference type="DrugBank" id="DB12924">
    <property type="generic name" value="Ozenoxacin"/>
</dbReference>
<dbReference type="DrugBank" id="DB11774">
    <property type="generic name" value="Pazufloxacin"/>
</dbReference>
<dbReference type="DrugBank" id="DB11892">
    <property type="generic name" value="Prulifloxacin"/>
</dbReference>
<dbReference type="DrugBank" id="DB01208">
    <property type="generic name" value="Sparfloxacin"/>
</dbReference>
<dbReference type="DrugBank" id="DB01405">
    <property type="generic name" value="Temafloxacin"/>
</dbReference>
<dbReference type="DrugBank" id="DB16312">
    <property type="generic name" value="TNP-2092"/>
</dbReference>
<dbReference type="DrugBank" id="DB00685">
    <property type="generic name" value="Trovafloxacin"/>
</dbReference>
<dbReference type="DrugBank" id="DB12817">
    <property type="generic name" value="Zoliflodacin"/>
</dbReference>
<dbReference type="DrugCentral" id="P0A0K8"/>
<dbReference type="OMA" id="QLWSTTM"/>
<dbReference type="BRENDA" id="5.6.2.2">
    <property type="organism ID" value="3352"/>
</dbReference>
<dbReference type="EvolutionaryTrace" id="P0A0K8"/>
<dbReference type="PRO" id="PR:P0A0K8"/>
<dbReference type="GO" id="GO:0005694">
    <property type="term" value="C:chromosome"/>
    <property type="evidence" value="ECO:0007669"/>
    <property type="project" value="InterPro"/>
</dbReference>
<dbReference type="GO" id="GO:0005737">
    <property type="term" value="C:cytoplasm"/>
    <property type="evidence" value="ECO:0007669"/>
    <property type="project" value="UniProtKB-SubCell"/>
</dbReference>
<dbReference type="GO" id="GO:0005524">
    <property type="term" value="F:ATP binding"/>
    <property type="evidence" value="ECO:0007669"/>
    <property type="project" value="UniProtKB-UniRule"/>
</dbReference>
<dbReference type="GO" id="GO:0003677">
    <property type="term" value="F:DNA binding"/>
    <property type="evidence" value="ECO:0007669"/>
    <property type="project" value="UniProtKB-KW"/>
</dbReference>
<dbReference type="GO" id="GO:0034335">
    <property type="term" value="F:DNA negative supercoiling activity"/>
    <property type="evidence" value="ECO:0007669"/>
    <property type="project" value="UniProtKB-ARBA"/>
</dbReference>
<dbReference type="GO" id="GO:0046872">
    <property type="term" value="F:metal ion binding"/>
    <property type="evidence" value="ECO:0007669"/>
    <property type="project" value="UniProtKB-KW"/>
</dbReference>
<dbReference type="GO" id="GO:0006265">
    <property type="term" value="P:DNA topological change"/>
    <property type="evidence" value="ECO:0007669"/>
    <property type="project" value="UniProtKB-UniRule"/>
</dbReference>
<dbReference type="GO" id="GO:0006261">
    <property type="term" value="P:DNA-templated DNA replication"/>
    <property type="evidence" value="ECO:0007669"/>
    <property type="project" value="UniProtKB-UniRule"/>
</dbReference>
<dbReference type="GO" id="GO:0046677">
    <property type="term" value="P:response to antibiotic"/>
    <property type="evidence" value="ECO:0007669"/>
    <property type="project" value="UniProtKB-KW"/>
</dbReference>
<dbReference type="CDD" id="cd16928">
    <property type="entry name" value="HATPase_GyrB-like"/>
    <property type="match status" value="1"/>
</dbReference>
<dbReference type="CDD" id="cd00822">
    <property type="entry name" value="TopoII_Trans_DNA_gyrase"/>
    <property type="match status" value="1"/>
</dbReference>
<dbReference type="CDD" id="cd03366">
    <property type="entry name" value="TOPRIM_TopoIIA_GyrB"/>
    <property type="match status" value="1"/>
</dbReference>
<dbReference type="FunFam" id="3.30.230.10:FF:000005">
    <property type="entry name" value="DNA gyrase subunit B"/>
    <property type="match status" value="1"/>
</dbReference>
<dbReference type="FunFam" id="3.30.565.10:FF:000002">
    <property type="entry name" value="DNA gyrase subunit B"/>
    <property type="match status" value="1"/>
</dbReference>
<dbReference type="FunFam" id="3.40.50.670:FF:000002">
    <property type="entry name" value="DNA gyrase subunit B"/>
    <property type="match status" value="1"/>
</dbReference>
<dbReference type="Gene3D" id="3.30.230.10">
    <property type="match status" value="1"/>
</dbReference>
<dbReference type="Gene3D" id="3.40.50.670">
    <property type="match status" value="1"/>
</dbReference>
<dbReference type="Gene3D" id="3.30.565.10">
    <property type="entry name" value="Histidine kinase-like ATPase, C-terminal domain"/>
    <property type="match status" value="1"/>
</dbReference>
<dbReference type="HAMAP" id="MF_01898">
    <property type="entry name" value="GyrB"/>
    <property type="match status" value="1"/>
</dbReference>
<dbReference type="InterPro" id="IPR002288">
    <property type="entry name" value="DNA_gyrase_B_C"/>
</dbReference>
<dbReference type="InterPro" id="IPR011557">
    <property type="entry name" value="GyrB"/>
</dbReference>
<dbReference type="InterPro" id="IPR036890">
    <property type="entry name" value="HATPase_C_sf"/>
</dbReference>
<dbReference type="InterPro" id="IPR020568">
    <property type="entry name" value="Ribosomal_Su5_D2-typ_SF"/>
</dbReference>
<dbReference type="InterPro" id="IPR014721">
    <property type="entry name" value="Ribsml_uS5_D2-typ_fold_subgr"/>
</dbReference>
<dbReference type="InterPro" id="IPR001241">
    <property type="entry name" value="Topo_IIA"/>
</dbReference>
<dbReference type="InterPro" id="IPR013760">
    <property type="entry name" value="Topo_IIA-like_dom_sf"/>
</dbReference>
<dbReference type="InterPro" id="IPR000565">
    <property type="entry name" value="Topo_IIA_B"/>
</dbReference>
<dbReference type="InterPro" id="IPR013759">
    <property type="entry name" value="Topo_IIA_B_C"/>
</dbReference>
<dbReference type="InterPro" id="IPR013506">
    <property type="entry name" value="Topo_IIA_bsu_dom2"/>
</dbReference>
<dbReference type="InterPro" id="IPR018522">
    <property type="entry name" value="TopoIIA_CS"/>
</dbReference>
<dbReference type="InterPro" id="IPR006171">
    <property type="entry name" value="TOPRIM_dom"/>
</dbReference>
<dbReference type="InterPro" id="IPR034160">
    <property type="entry name" value="TOPRIM_GyrB"/>
</dbReference>
<dbReference type="NCBIfam" id="TIGR01059">
    <property type="entry name" value="gyrB"/>
    <property type="match status" value="1"/>
</dbReference>
<dbReference type="NCBIfam" id="NF004189">
    <property type="entry name" value="PRK05644.1"/>
    <property type="match status" value="1"/>
</dbReference>
<dbReference type="NCBIfam" id="NF011501">
    <property type="entry name" value="PRK14939.1"/>
    <property type="match status" value="1"/>
</dbReference>
<dbReference type="PANTHER" id="PTHR45866:SF1">
    <property type="entry name" value="DNA GYRASE SUBUNIT B, MITOCHONDRIAL"/>
    <property type="match status" value="1"/>
</dbReference>
<dbReference type="PANTHER" id="PTHR45866">
    <property type="entry name" value="DNA GYRASE/TOPOISOMERASE SUBUNIT B"/>
    <property type="match status" value="1"/>
</dbReference>
<dbReference type="Pfam" id="PF00204">
    <property type="entry name" value="DNA_gyraseB"/>
    <property type="match status" value="1"/>
</dbReference>
<dbReference type="Pfam" id="PF00986">
    <property type="entry name" value="DNA_gyraseB_C"/>
    <property type="match status" value="1"/>
</dbReference>
<dbReference type="Pfam" id="PF02518">
    <property type="entry name" value="HATPase_c"/>
    <property type="match status" value="1"/>
</dbReference>
<dbReference type="Pfam" id="PF01751">
    <property type="entry name" value="Toprim"/>
    <property type="match status" value="1"/>
</dbReference>
<dbReference type="PRINTS" id="PR01159">
    <property type="entry name" value="DNAGYRASEB"/>
</dbReference>
<dbReference type="PRINTS" id="PR00418">
    <property type="entry name" value="TPI2FAMILY"/>
</dbReference>
<dbReference type="SMART" id="SM00387">
    <property type="entry name" value="HATPase_c"/>
    <property type="match status" value="1"/>
</dbReference>
<dbReference type="SMART" id="SM00433">
    <property type="entry name" value="TOP2c"/>
    <property type="match status" value="1"/>
</dbReference>
<dbReference type="SUPFAM" id="SSF55874">
    <property type="entry name" value="ATPase domain of HSP90 chaperone/DNA topoisomerase II/histidine kinase"/>
    <property type="match status" value="1"/>
</dbReference>
<dbReference type="SUPFAM" id="SSF54211">
    <property type="entry name" value="Ribosomal protein S5 domain 2-like"/>
    <property type="match status" value="1"/>
</dbReference>
<dbReference type="SUPFAM" id="SSF56719">
    <property type="entry name" value="Type II DNA topoisomerase"/>
    <property type="match status" value="1"/>
</dbReference>
<dbReference type="PROSITE" id="PS00177">
    <property type="entry name" value="TOPOISOMERASE_II"/>
    <property type="match status" value="1"/>
</dbReference>
<dbReference type="PROSITE" id="PS50880">
    <property type="entry name" value="TOPRIM"/>
    <property type="match status" value="1"/>
</dbReference>